<sequence length="126" mass="14331">MILGIGIDIIEIIRIKNAIERNSKFMKRVFTEKEIKYFEKINFRHESIAGRFAAKEAIVKALGTGFRNMKITDIEVINDKVGKPLVELKGGALEKIKVYKDVKIHLSISHNRDNAIAYSIIEGECI</sequence>
<name>ACPS_CLOTE</name>
<keyword id="KW-0963">Cytoplasm</keyword>
<keyword id="KW-0275">Fatty acid biosynthesis</keyword>
<keyword id="KW-0276">Fatty acid metabolism</keyword>
<keyword id="KW-0444">Lipid biosynthesis</keyword>
<keyword id="KW-0443">Lipid metabolism</keyword>
<keyword id="KW-0460">Magnesium</keyword>
<keyword id="KW-0479">Metal-binding</keyword>
<keyword id="KW-1185">Reference proteome</keyword>
<keyword id="KW-0808">Transferase</keyword>
<dbReference type="EC" id="2.7.8.7" evidence="1"/>
<dbReference type="EMBL" id="AE015927">
    <property type="protein sequence ID" value="AAO36977.1"/>
    <property type="molecule type" value="Genomic_DNA"/>
</dbReference>
<dbReference type="RefSeq" id="WP_011100638.1">
    <property type="nucleotide sequence ID" value="NC_004557.1"/>
</dbReference>
<dbReference type="SMR" id="Q890W8"/>
<dbReference type="STRING" id="212717.CTC_02516"/>
<dbReference type="GeneID" id="24253215"/>
<dbReference type="KEGG" id="ctc:CTC_02516"/>
<dbReference type="HOGENOM" id="CLU_089696_0_2_9"/>
<dbReference type="OrthoDB" id="517356at2"/>
<dbReference type="Proteomes" id="UP000001412">
    <property type="component" value="Chromosome"/>
</dbReference>
<dbReference type="GO" id="GO:0005737">
    <property type="term" value="C:cytoplasm"/>
    <property type="evidence" value="ECO:0007669"/>
    <property type="project" value="UniProtKB-SubCell"/>
</dbReference>
<dbReference type="GO" id="GO:0008897">
    <property type="term" value="F:holo-[acyl-carrier-protein] synthase activity"/>
    <property type="evidence" value="ECO:0007669"/>
    <property type="project" value="UniProtKB-UniRule"/>
</dbReference>
<dbReference type="GO" id="GO:0000287">
    <property type="term" value="F:magnesium ion binding"/>
    <property type="evidence" value="ECO:0007669"/>
    <property type="project" value="UniProtKB-UniRule"/>
</dbReference>
<dbReference type="GO" id="GO:0006633">
    <property type="term" value="P:fatty acid biosynthetic process"/>
    <property type="evidence" value="ECO:0007669"/>
    <property type="project" value="UniProtKB-UniRule"/>
</dbReference>
<dbReference type="Gene3D" id="3.90.470.20">
    <property type="entry name" value="4'-phosphopantetheinyl transferase domain"/>
    <property type="match status" value="1"/>
</dbReference>
<dbReference type="HAMAP" id="MF_00101">
    <property type="entry name" value="AcpS"/>
    <property type="match status" value="1"/>
</dbReference>
<dbReference type="InterPro" id="IPR008278">
    <property type="entry name" value="4-PPantetheinyl_Trfase_dom"/>
</dbReference>
<dbReference type="InterPro" id="IPR037143">
    <property type="entry name" value="4-PPantetheinyl_Trfase_dom_sf"/>
</dbReference>
<dbReference type="InterPro" id="IPR002582">
    <property type="entry name" value="ACPS"/>
</dbReference>
<dbReference type="InterPro" id="IPR004568">
    <property type="entry name" value="Ppantetheine-prot_Trfase_dom"/>
</dbReference>
<dbReference type="NCBIfam" id="TIGR00516">
    <property type="entry name" value="acpS"/>
    <property type="match status" value="1"/>
</dbReference>
<dbReference type="NCBIfam" id="TIGR00556">
    <property type="entry name" value="pantethn_trn"/>
    <property type="match status" value="1"/>
</dbReference>
<dbReference type="Pfam" id="PF01648">
    <property type="entry name" value="ACPS"/>
    <property type="match status" value="1"/>
</dbReference>
<dbReference type="SUPFAM" id="SSF56214">
    <property type="entry name" value="4'-phosphopantetheinyl transferase"/>
    <property type="match status" value="1"/>
</dbReference>
<reference key="1">
    <citation type="journal article" date="2003" name="Proc. Natl. Acad. Sci. U.S.A.">
        <title>The genome sequence of Clostridium tetani, the causative agent of tetanus disease.</title>
        <authorList>
            <person name="Brueggemann H."/>
            <person name="Baeumer S."/>
            <person name="Fricke W.F."/>
            <person name="Wiezer A."/>
            <person name="Liesegang H."/>
            <person name="Decker I."/>
            <person name="Herzberg C."/>
            <person name="Martinez-Arias R."/>
            <person name="Merkl R."/>
            <person name="Henne A."/>
            <person name="Gottschalk G."/>
        </authorList>
    </citation>
    <scope>NUCLEOTIDE SEQUENCE [LARGE SCALE GENOMIC DNA]</scope>
    <source>
        <strain>Massachusetts / E88</strain>
    </source>
</reference>
<comment type="function">
    <text evidence="1">Transfers the 4'-phosphopantetheine moiety from coenzyme A to a Ser of acyl-carrier-protein.</text>
</comment>
<comment type="catalytic activity">
    <reaction evidence="1">
        <text>apo-[ACP] + CoA = holo-[ACP] + adenosine 3',5'-bisphosphate + H(+)</text>
        <dbReference type="Rhea" id="RHEA:12068"/>
        <dbReference type="Rhea" id="RHEA-COMP:9685"/>
        <dbReference type="Rhea" id="RHEA-COMP:9690"/>
        <dbReference type="ChEBI" id="CHEBI:15378"/>
        <dbReference type="ChEBI" id="CHEBI:29999"/>
        <dbReference type="ChEBI" id="CHEBI:57287"/>
        <dbReference type="ChEBI" id="CHEBI:58343"/>
        <dbReference type="ChEBI" id="CHEBI:64479"/>
        <dbReference type="EC" id="2.7.8.7"/>
    </reaction>
</comment>
<comment type="cofactor">
    <cofactor evidence="1">
        <name>Mg(2+)</name>
        <dbReference type="ChEBI" id="CHEBI:18420"/>
    </cofactor>
</comment>
<comment type="subcellular location">
    <subcellularLocation>
        <location evidence="1">Cytoplasm</location>
    </subcellularLocation>
</comment>
<comment type="similarity">
    <text evidence="1">Belongs to the P-Pant transferase superfamily. AcpS family.</text>
</comment>
<gene>
    <name evidence="1" type="primary">acpS</name>
    <name type="ordered locus">CTC_02516</name>
</gene>
<accession>Q890W8</accession>
<proteinExistence type="inferred from homology"/>
<protein>
    <recommendedName>
        <fullName evidence="1">Holo-[acyl-carrier-protein] synthase</fullName>
        <shortName evidence="1">Holo-ACP synthase</shortName>
        <ecNumber evidence="1">2.7.8.7</ecNumber>
    </recommendedName>
    <alternativeName>
        <fullName evidence="1">4'-phosphopantetheinyl transferase AcpS</fullName>
    </alternativeName>
</protein>
<evidence type="ECO:0000255" key="1">
    <source>
        <dbReference type="HAMAP-Rule" id="MF_00101"/>
    </source>
</evidence>
<feature type="chain" id="PRO_0000175638" description="Holo-[acyl-carrier-protein] synthase">
    <location>
        <begin position="1"/>
        <end position="126"/>
    </location>
</feature>
<feature type="binding site" evidence="1">
    <location>
        <position position="8"/>
    </location>
    <ligand>
        <name>Mg(2+)</name>
        <dbReference type="ChEBI" id="CHEBI:18420"/>
    </ligand>
</feature>
<feature type="binding site" evidence="1">
    <location>
        <position position="56"/>
    </location>
    <ligand>
        <name>Mg(2+)</name>
        <dbReference type="ChEBI" id="CHEBI:18420"/>
    </ligand>
</feature>
<organism>
    <name type="scientific">Clostridium tetani (strain Massachusetts / E88)</name>
    <dbReference type="NCBI Taxonomy" id="212717"/>
    <lineage>
        <taxon>Bacteria</taxon>
        <taxon>Bacillati</taxon>
        <taxon>Bacillota</taxon>
        <taxon>Clostridia</taxon>
        <taxon>Eubacteriales</taxon>
        <taxon>Clostridiaceae</taxon>
        <taxon>Clostridium</taxon>
    </lineage>
</organism>